<gene>
    <name type="primary">mybT</name>
    <name type="ORF">DDB_G0292180</name>
</gene>
<organism>
    <name type="scientific">Dictyostelium discoideum</name>
    <name type="common">Social amoeba</name>
    <dbReference type="NCBI Taxonomy" id="44689"/>
    <lineage>
        <taxon>Eukaryota</taxon>
        <taxon>Amoebozoa</taxon>
        <taxon>Evosea</taxon>
        <taxon>Eumycetozoa</taxon>
        <taxon>Dictyostelia</taxon>
        <taxon>Dictyosteliales</taxon>
        <taxon>Dictyosteliaceae</taxon>
        <taxon>Dictyostelium</taxon>
    </lineage>
</organism>
<name>MYBT_DICDI</name>
<accession>Q54DQ3</accession>
<dbReference type="EMBL" id="AAFI02000187">
    <property type="protein sequence ID" value="EAL61446.1"/>
    <property type="molecule type" value="Genomic_DNA"/>
</dbReference>
<dbReference type="RefSeq" id="XP_629819.1">
    <property type="nucleotide sequence ID" value="XM_629817.1"/>
</dbReference>
<dbReference type="SMR" id="Q54DQ3"/>
<dbReference type="PaxDb" id="44689-DDB0233336"/>
<dbReference type="EnsemblProtists" id="EAL61446">
    <property type="protein sequence ID" value="EAL61446"/>
    <property type="gene ID" value="DDB_G0292180"/>
</dbReference>
<dbReference type="GeneID" id="8628500"/>
<dbReference type="KEGG" id="ddi:DDB_G0292180"/>
<dbReference type="dictyBase" id="DDB_G0292180">
    <property type="gene designation" value="mybT"/>
</dbReference>
<dbReference type="VEuPathDB" id="AmoebaDB:DDB_G0292180"/>
<dbReference type="HOGENOM" id="CLU_1436881_0_0_1"/>
<dbReference type="InParanoid" id="Q54DQ3"/>
<dbReference type="PRO" id="PR:Q54DQ3"/>
<dbReference type="Proteomes" id="UP000002195">
    <property type="component" value="Chromosome 6"/>
</dbReference>
<dbReference type="InterPro" id="IPR009057">
    <property type="entry name" value="Homeodomain-like_sf"/>
</dbReference>
<dbReference type="InterPro" id="IPR001005">
    <property type="entry name" value="SANT/Myb"/>
</dbReference>
<dbReference type="SUPFAM" id="SSF46689">
    <property type="entry name" value="Homeodomain-like"/>
    <property type="match status" value="1"/>
</dbReference>
<dbReference type="PROSITE" id="PS50090">
    <property type="entry name" value="MYB_LIKE"/>
    <property type="match status" value="1"/>
</dbReference>
<reference key="1">
    <citation type="journal article" date="2005" name="Nature">
        <title>The genome of the social amoeba Dictyostelium discoideum.</title>
        <authorList>
            <person name="Eichinger L."/>
            <person name="Pachebat J.A."/>
            <person name="Gloeckner G."/>
            <person name="Rajandream M.A."/>
            <person name="Sucgang R."/>
            <person name="Berriman M."/>
            <person name="Song J."/>
            <person name="Olsen R."/>
            <person name="Szafranski K."/>
            <person name="Xu Q."/>
            <person name="Tunggal B."/>
            <person name="Kummerfeld S."/>
            <person name="Madera M."/>
            <person name="Konfortov B.A."/>
            <person name="Rivero F."/>
            <person name="Bankier A.T."/>
            <person name="Lehmann R."/>
            <person name="Hamlin N."/>
            <person name="Davies R."/>
            <person name="Gaudet P."/>
            <person name="Fey P."/>
            <person name="Pilcher K."/>
            <person name="Chen G."/>
            <person name="Saunders D."/>
            <person name="Sodergren E.J."/>
            <person name="Davis P."/>
            <person name="Kerhornou A."/>
            <person name="Nie X."/>
            <person name="Hall N."/>
            <person name="Anjard C."/>
            <person name="Hemphill L."/>
            <person name="Bason N."/>
            <person name="Farbrother P."/>
            <person name="Desany B."/>
            <person name="Just E."/>
            <person name="Morio T."/>
            <person name="Rost R."/>
            <person name="Churcher C.M."/>
            <person name="Cooper J."/>
            <person name="Haydock S."/>
            <person name="van Driessche N."/>
            <person name="Cronin A."/>
            <person name="Goodhead I."/>
            <person name="Muzny D.M."/>
            <person name="Mourier T."/>
            <person name="Pain A."/>
            <person name="Lu M."/>
            <person name="Harper D."/>
            <person name="Lindsay R."/>
            <person name="Hauser H."/>
            <person name="James K.D."/>
            <person name="Quiles M."/>
            <person name="Madan Babu M."/>
            <person name="Saito T."/>
            <person name="Buchrieser C."/>
            <person name="Wardroper A."/>
            <person name="Felder M."/>
            <person name="Thangavelu M."/>
            <person name="Johnson D."/>
            <person name="Knights A."/>
            <person name="Loulseged H."/>
            <person name="Mungall K.L."/>
            <person name="Oliver K."/>
            <person name="Price C."/>
            <person name="Quail M.A."/>
            <person name="Urushihara H."/>
            <person name="Hernandez J."/>
            <person name="Rabbinowitsch E."/>
            <person name="Steffen D."/>
            <person name="Sanders M."/>
            <person name="Ma J."/>
            <person name="Kohara Y."/>
            <person name="Sharp S."/>
            <person name="Simmonds M.N."/>
            <person name="Spiegler S."/>
            <person name="Tivey A."/>
            <person name="Sugano S."/>
            <person name="White B."/>
            <person name="Walker D."/>
            <person name="Woodward J.R."/>
            <person name="Winckler T."/>
            <person name="Tanaka Y."/>
            <person name="Shaulsky G."/>
            <person name="Schleicher M."/>
            <person name="Weinstock G.M."/>
            <person name="Rosenthal A."/>
            <person name="Cox E.C."/>
            <person name="Chisholm R.L."/>
            <person name="Gibbs R.A."/>
            <person name="Loomis W.F."/>
            <person name="Platzer M."/>
            <person name="Kay R.R."/>
            <person name="Williams J.G."/>
            <person name="Dear P.H."/>
            <person name="Noegel A.A."/>
            <person name="Barrell B.G."/>
            <person name="Kuspa A."/>
        </authorList>
    </citation>
    <scope>NUCLEOTIDE SEQUENCE [LARGE SCALE GENOMIC DNA]</scope>
    <source>
        <strain>AX4</strain>
    </source>
</reference>
<keyword id="KW-1185">Reference proteome</keyword>
<protein>
    <recommendedName>
        <fullName>Myb-like protein T</fullName>
    </recommendedName>
</protein>
<feature type="chain" id="PRO_0000329392" description="Myb-like protein T">
    <location>
        <begin position="1"/>
        <end position="189"/>
    </location>
</feature>
<feature type="domain" description="Myb-like" evidence="1">
    <location>
        <begin position="121"/>
        <end position="172"/>
    </location>
</feature>
<sequence>MFEINGNLKVDINKFKKIYTTVFDKNISPQINEILDLFEFDTTKSSYEDVIEEYSKFENDSLGSFEYLDYSDLRLLSKRKWNNKEALIIGNGKSNYKTTVQIKGDLLDKVLKKPSPVISRNWSPDEQKALMVEVSTLGNKSEINWFFISQQLFLKGISRNARECQRKHESIQYVGLSGNPKAKFKGTFD</sequence>
<evidence type="ECO:0000255" key="1">
    <source>
        <dbReference type="PROSITE-ProRule" id="PRU00133"/>
    </source>
</evidence>
<proteinExistence type="predicted"/>